<gene>
    <name evidence="1" type="primary">miaA</name>
    <name type="ordered locus">GSU2000</name>
</gene>
<evidence type="ECO:0000255" key="1">
    <source>
        <dbReference type="HAMAP-Rule" id="MF_00185"/>
    </source>
</evidence>
<proteinExistence type="inferred from homology"/>
<sequence>MGNQAGSKTKLVIIQGPTASGKSELAVRLAEACGGDVVNADSMQVYRGMDIGTAKPSPELVARVPHHLYDIVDPDVNFTAADYRREAGRVITEIHSRGKRPILVGGTGLYIKTLIGGLAPSPGADDTIRAELEEDARSEGAAALHDRLAQVDPAAAARLHPNDRVRIVRALEVFLMTGKPLSEFQEEHRFADEPYDCLKLGISVERDDLYRRINERVNRMFAEGFVEEVSGLLNAGYSPDLKAMGAIGYKEVCAYLAGTCSLDEARELVQRNTRRYAKRQLTWFRKDPAIKWVEYPANFDSISTIAMKFFG</sequence>
<feature type="chain" id="PRO_0000163921" description="tRNA dimethylallyltransferase">
    <location>
        <begin position="1"/>
        <end position="311"/>
    </location>
</feature>
<feature type="region of interest" description="Interaction with substrate tRNA" evidence="1">
    <location>
        <begin position="41"/>
        <end position="44"/>
    </location>
</feature>
<feature type="binding site" evidence="1">
    <location>
        <begin position="16"/>
        <end position="23"/>
    </location>
    <ligand>
        <name>ATP</name>
        <dbReference type="ChEBI" id="CHEBI:30616"/>
    </ligand>
</feature>
<feature type="binding site" evidence="1">
    <location>
        <begin position="18"/>
        <end position="23"/>
    </location>
    <ligand>
        <name>substrate</name>
    </ligand>
</feature>
<feature type="site" description="Interaction with substrate tRNA" evidence="1">
    <location>
        <position position="107"/>
    </location>
</feature>
<feature type="site" description="Interaction with substrate tRNA" evidence="1">
    <location>
        <position position="129"/>
    </location>
</feature>
<organism>
    <name type="scientific">Geobacter sulfurreducens (strain ATCC 51573 / DSM 12127 / PCA)</name>
    <dbReference type="NCBI Taxonomy" id="243231"/>
    <lineage>
        <taxon>Bacteria</taxon>
        <taxon>Pseudomonadati</taxon>
        <taxon>Thermodesulfobacteriota</taxon>
        <taxon>Desulfuromonadia</taxon>
        <taxon>Geobacterales</taxon>
        <taxon>Geobacteraceae</taxon>
        <taxon>Geobacter</taxon>
    </lineage>
</organism>
<name>MIAA_GEOSL</name>
<comment type="function">
    <text evidence="1">Catalyzes the transfer of a dimethylallyl group onto the adenine at position 37 in tRNAs that read codons beginning with uridine, leading to the formation of N6-(dimethylallyl)adenosine (i(6)A).</text>
</comment>
<comment type="catalytic activity">
    <reaction evidence="1">
        <text>adenosine(37) in tRNA + dimethylallyl diphosphate = N(6)-dimethylallyladenosine(37) in tRNA + diphosphate</text>
        <dbReference type="Rhea" id="RHEA:26482"/>
        <dbReference type="Rhea" id="RHEA-COMP:10162"/>
        <dbReference type="Rhea" id="RHEA-COMP:10375"/>
        <dbReference type="ChEBI" id="CHEBI:33019"/>
        <dbReference type="ChEBI" id="CHEBI:57623"/>
        <dbReference type="ChEBI" id="CHEBI:74411"/>
        <dbReference type="ChEBI" id="CHEBI:74415"/>
        <dbReference type="EC" id="2.5.1.75"/>
    </reaction>
</comment>
<comment type="cofactor">
    <cofactor evidence="1">
        <name>Mg(2+)</name>
        <dbReference type="ChEBI" id="CHEBI:18420"/>
    </cofactor>
</comment>
<comment type="subunit">
    <text evidence="1">Monomer.</text>
</comment>
<comment type="similarity">
    <text evidence="1">Belongs to the IPP transferase family.</text>
</comment>
<keyword id="KW-0067">ATP-binding</keyword>
<keyword id="KW-0460">Magnesium</keyword>
<keyword id="KW-0547">Nucleotide-binding</keyword>
<keyword id="KW-1185">Reference proteome</keyword>
<keyword id="KW-0808">Transferase</keyword>
<keyword id="KW-0819">tRNA processing</keyword>
<accession>Q74BP1</accession>
<reference key="1">
    <citation type="journal article" date="2003" name="Science">
        <title>Genome of Geobacter sulfurreducens: metal reduction in subsurface environments.</title>
        <authorList>
            <person name="Methe B.A."/>
            <person name="Nelson K.E."/>
            <person name="Eisen J.A."/>
            <person name="Paulsen I.T."/>
            <person name="Nelson W.C."/>
            <person name="Heidelberg J.F."/>
            <person name="Wu D."/>
            <person name="Wu M."/>
            <person name="Ward N.L."/>
            <person name="Beanan M.J."/>
            <person name="Dodson R.J."/>
            <person name="Madupu R."/>
            <person name="Brinkac L.M."/>
            <person name="Daugherty S.C."/>
            <person name="DeBoy R.T."/>
            <person name="Durkin A.S."/>
            <person name="Gwinn M.L."/>
            <person name="Kolonay J.F."/>
            <person name="Sullivan S.A."/>
            <person name="Haft D.H."/>
            <person name="Selengut J."/>
            <person name="Davidsen T.M."/>
            <person name="Zafar N."/>
            <person name="White O."/>
            <person name="Tran B."/>
            <person name="Romero C."/>
            <person name="Forberger H.A."/>
            <person name="Weidman J.F."/>
            <person name="Khouri H.M."/>
            <person name="Feldblyum T.V."/>
            <person name="Utterback T.R."/>
            <person name="Van Aken S.E."/>
            <person name="Lovley D.R."/>
            <person name="Fraser C.M."/>
        </authorList>
    </citation>
    <scope>NUCLEOTIDE SEQUENCE [LARGE SCALE GENOMIC DNA]</scope>
    <source>
        <strain>ATCC 51573 / DSM 12127 / PCA</strain>
    </source>
</reference>
<dbReference type="EC" id="2.5.1.75" evidence="1"/>
<dbReference type="EMBL" id="AE017180">
    <property type="protein sequence ID" value="AAR35376.1"/>
    <property type="molecule type" value="Genomic_DNA"/>
</dbReference>
<dbReference type="RefSeq" id="NP_953049.1">
    <property type="nucleotide sequence ID" value="NC_002939.5"/>
</dbReference>
<dbReference type="RefSeq" id="WP_010942643.1">
    <property type="nucleotide sequence ID" value="NC_002939.5"/>
</dbReference>
<dbReference type="SMR" id="Q74BP1"/>
<dbReference type="FunCoup" id="Q74BP1">
    <property type="interactions" value="487"/>
</dbReference>
<dbReference type="STRING" id="243231.GSU2000"/>
<dbReference type="EnsemblBacteria" id="AAR35376">
    <property type="protein sequence ID" value="AAR35376"/>
    <property type="gene ID" value="GSU2000"/>
</dbReference>
<dbReference type="KEGG" id="gsu:GSU2000"/>
<dbReference type="PATRIC" id="fig|243231.5.peg.2036"/>
<dbReference type="eggNOG" id="COG0324">
    <property type="taxonomic scope" value="Bacteria"/>
</dbReference>
<dbReference type="HOGENOM" id="CLU_032616_0_1_7"/>
<dbReference type="InParanoid" id="Q74BP1"/>
<dbReference type="OrthoDB" id="9776390at2"/>
<dbReference type="Proteomes" id="UP000000577">
    <property type="component" value="Chromosome"/>
</dbReference>
<dbReference type="GO" id="GO:0005524">
    <property type="term" value="F:ATP binding"/>
    <property type="evidence" value="ECO:0007669"/>
    <property type="project" value="UniProtKB-UniRule"/>
</dbReference>
<dbReference type="GO" id="GO:0052381">
    <property type="term" value="F:tRNA dimethylallyltransferase activity"/>
    <property type="evidence" value="ECO:0000318"/>
    <property type="project" value="GO_Central"/>
</dbReference>
<dbReference type="GO" id="GO:0006400">
    <property type="term" value="P:tRNA modification"/>
    <property type="evidence" value="ECO:0000318"/>
    <property type="project" value="GO_Central"/>
</dbReference>
<dbReference type="FunFam" id="1.10.20.140:FF:000001">
    <property type="entry name" value="tRNA dimethylallyltransferase"/>
    <property type="match status" value="1"/>
</dbReference>
<dbReference type="Gene3D" id="1.10.20.140">
    <property type="match status" value="1"/>
</dbReference>
<dbReference type="Gene3D" id="3.40.50.300">
    <property type="entry name" value="P-loop containing nucleotide triphosphate hydrolases"/>
    <property type="match status" value="1"/>
</dbReference>
<dbReference type="HAMAP" id="MF_00185">
    <property type="entry name" value="IPP_trans"/>
    <property type="match status" value="1"/>
</dbReference>
<dbReference type="InterPro" id="IPR039657">
    <property type="entry name" value="Dimethylallyltransferase"/>
</dbReference>
<dbReference type="InterPro" id="IPR018022">
    <property type="entry name" value="IPT"/>
</dbReference>
<dbReference type="InterPro" id="IPR027417">
    <property type="entry name" value="P-loop_NTPase"/>
</dbReference>
<dbReference type="NCBIfam" id="TIGR00174">
    <property type="entry name" value="miaA"/>
    <property type="match status" value="1"/>
</dbReference>
<dbReference type="PANTHER" id="PTHR11088">
    <property type="entry name" value="TRNA DIMETHYLALLYLTRANSFERASE"/>
    <property type="match status" value="1"/>
</dbReference>
<dbReference type="PANTHER" id="PTHR11088:SF60">
    <property type="entry name" value="TRNA DIMETHYLALLYLTRANSFERASE"/>
    <property type="match status" value="1"/>
</dbReference>
<dbReference type="Pfam" id="PF01715">
    <property type="entry name" value="IPPT"/>
    <property type="match status" value="1"/>
</dbReference>
<dbReference type="SUPFAM" id="SSF52540">
    <property type="entry name" value="P-loop containing nucleoside triphosphate hydrolases"/>
    <property type="match status" value="2"/>
</dbReference>
<protein>
    <recommendedName>
        <fullName evidence="1">tRNA dimethylallyltransferase</fullName>
        <ecNumber evidence="1">2.5.1.75</ecNumber>
    </recommendedName>
    <alternativeName>
        <fullName evidence="1">Dimethylallyl diphosphate:tRNA dimethylallyltransferase</fullName>
        <shortName evidence="1">DMAPP:tRNA dimethylallyltransferase</shortName>
        <shortName evidence="1">DMATase</shortName>
    </alternativeName>
    <alternativeName>
        <fullName evidence="1">Isopentenyl-diphosphate:tRNA isopentenyltransferase</fullName>
        <shortName evidence="1">IPP transferase</shortName>
        <shortName evidence="1">IPPT</shortName>
        <shortName evidence="1">IPTase</shortName>
    </alternativeName>
</protein>